<dbReference type="EMBL" id="AB169748">
    <property type="protein sequence ID" value="BAE01829.1"/>
    <property type="molecule type" value="mRNA"/>
</dbReference>
<dbReference type="RefSeq" id="NP_001270826.1">
    <property type="nucleotide sequence ID" value="NM_001283897.1"/>
</dbReference>
<dbReference type="SMR" id="Q4R4Z6"/>
<dbReference type="STRING" id="9541.ENSMFAP00000036782"/>
<dbReference type="eggNOG" id="KOG1628">
    <property type="taxonomic scope" value="Eukaryota"/>
</dbReference>
<dbReference type="Proteomes" id="UP000233100">
    <property type="component" value="Unplaced"/>
</dbReference>
<dbReference type="GO" id="GO:0022627">
    <property type="term" value="C:cytosolic small ribosomal subunit"/>
    <property type="evidence" value="ECO:0007669"/>
    <property type="project" value="UniProtKB-UniRule"/>
</dbReference>
<dbReference type="GO" id="GO:0005730">
    <property type="term" value="C:nucleolus"/>
    <property type="evidence" value="ECO:0007669"/>
    <property type="project" value="UniProtKB-SubCell"/>
</dbReference>
<dbReference type="GO" id="GO:1990904">
    <property type="term" value="C:ribonucleoprotein complex"/>
    <property type="evidence" value="ECO:0000250"/>
    <property type="project" value="UniProtKB"/>
</dbReference>
<dbReference type="GO" id="GO:0032040">
    <property type="term" value="C:small-subunit processome"/>
    <property type="evidence" value="ECO:0000250"/>
    <property type="project" value="UniProtKB"/>
</dbReference>
<dbReference type="GO" id="GO:0003735">
    <property type="term" value="F:structural constituent of ribosome"/>
    <property type="evidence" value="ECO:0007669"/>
    <property type="project" value="UniProtKB-UniRule"/>
</dbReference>
<dbReference type="GO" id="GO:0030154">
    <property type="term" value="P:cell differentiation"/>
    <property type="evidence" value="ECO:0007669"/>
    <property type="project" value="UniProtKB-KW"/>
</dbReference>
<dbReference type="GO" id="GO:0042274">
    <property type="term" value="P:ribosomal small subunit biogenesis"/>
    <property type="evidence" value="ECO:0000250"/>
    <property type="project" value="UniProtKB"/>
</dbReference>
<dbReference type="GO" id="GO:0006412">
    <property type="term" value="P:translation"/>
    <property type="evidence" value="ECO:0007669"/>
    <property type="project" value="UniProtKB-UniRule"/>
</dbReference>
<dbReference type="HAMAP" id="MF_03122">
    <property type="entry name" value="Ribosomal_eS1_euk"/>
    <property type="match status" value="1"/>
</dbReference>
<dbReference type="InterPro" id="IPR001593">
    <property type="entry name" value="Ribosomal_eS1"/>
</dbReference>
<dbReference type="InterPro" id="IPR027500">
    <property type="entry name" value="Ribosomal_eS1_euk"/>
</dbReference>
<dbReference type="PANTHER" id="PTHR11830">
    <property type="entry name" value="40S RIBOSOMAL PROTEIN S3A"/>
    <property type="match status" value="1"/>
</dbReference>
<dbReference type="Pfam" id="PF01015">
    <property type="entry name" value="Ribosomal_S3Ae"/>
    <property type="match status" value="1"/>
</dbReference>
<dbReference type="SMART" id="SM01397">
    <property type="entry name" value="Ribosomal_S3Ae"/>
    <property type="match status" value="1"/>
</dbReference>
<gene>
    <name evidence="3" type="primary">RPS3A</name>
    <name type="ORF">QnpA-15704</name>
</gene>
<proteinExistence type="evidence at transcript level"/>
<organism>
    <name type="scientific">Macaca fascicularis</name>
    <name type="common">Crab-eating macaque</name>
    <name type="synonym">Cynomolgus monkey</name>
    <dbReference type="NCBI Taxonomy" id="9541"/>
    <lineage>
        <taxon>Eukaryota</taxon>
        <taxon>Metazoa</taxon>
        <taxon>Chordata</taxon>
        <taxon>Craniata</taxon>
        <taxon>Vertebrata</taxon>
        <taxon>Euteleostomi</taxon>
        <taxon>Mammalia</taxon>
        <taxon>Eutheria</taxon>
        <taxon>Euarchontoglires</taxon>
        <taxon>Primates</taxon>
        <taxon>Haplorrhini</taxon>
        <taxon>Catarrhini</taxon>
        <taxon>Cercopithecidae</taxon>
        <taxon>Cercopithecinae</taxon>
        <taxon>Macaca</taxon>
    </lineage>
</organism>
<feature type="chain" id="PRO_0000230764" description="Small ribosomal subunit protein eS1">
    <location>
        <begin position="1"/>
        <end position="264"/>
    </location>
</feature>
<feature type="region of interest" description="Disordered" evidence="4">
    <location>
        <begin position="232"/>
        <end position="264"/>
    </location>
</feature>
<feature type="compositionally biased region" description="Basic and acidic residues" evidence="4">
    <location>
        <begin position="242"/>
        <end position="255"/>
    </location>
</feature>
<feature type="modified residue" description="N6-acetyllysine; alternate" evidence="1">
    <location>
        <position position="34"/>
    </location>
</feature>
<feature type="modified residue" description="N6-acetyllysine" evidence="2">
    <location>
        <position position="56"/>
    </location>
</feature>
<feature type="modified residue" description="ADP-ribosyltyrosine" evidence="1">
    <location>
        <position position="155"/>
    </location>
</feature>
<feature type="modified residue" description="Phosphoserine" evidence="1">
    <location>
        <position position="236"/>
    </location>
</feature>
<feature type="modified residue" description="Phosphoserine" evidence="2">
    <location>
        <position position="237"/>
    </location>
</feature>
<feature type="modified residue" description="N6-acetyllysine; alternate" evidence="1">
    <location>
        <position position="249"/>
    </location>
</feature>
<feature type="modified residue" description="Phosphotyrosine" evidence="1">
    <location>
        <position position="256"/>
    </location>
</feature>
<feature type="modified residue" description="Phosphoserine" evidence="1">
    <location>
        <position position="263"/>
    </location>
</feature>
<feature type="cross-link" description="Glycyl lysine isopeptide (Lys-Gly) (interchain with G-Cter in SUMO2); alternate" evidence="1">
    <location>
        <position position="34"/>
    </location>
</feature>
<feature type="cross-link" description="Glycyl lysine isopeptide (Lys-Gly) (interchain with G-Cter in SUMO2); alternate" evidence="1">
    <location>
        <position position="249"/>
    </location>
</feature>
<name>RS3A_MACFA</name>
<sequence>MAVGKNKRLTKGGKKGAKKKVVDPFSKKDWYDVKAPAMFNIRNIGKTLVTRTQGTKIASDGLKGHVFEVSLADLQNDEVAFRKFKLITEDVQGKNCLTNFHGMDLTRDKMCSMVKKWQTMIEAHVDVKTTDGYLLRLFCVGFTKKRNNQIRKTSYAQHQQVRQIRKKMMEIMTREVQTNDLKEVVNKLIPDSIGKDIEKACQSIYPLHDVFVRKVKMLKKPKFELGKLMELHGEGSSSGKATGDETGAKVERADGYEPPVQESV</sequence>
<evidence type="ECO:0000250" key="1">
    <source>
        <dbReference type="UniProtKB" id="P61247"/>
    </source>
</evidence>
<evidence type="ECO:0000250" key="2">
    <source>
        <dbReference type="UniProtKB" id="P97351"/>
    </source>
</evidence>
<evidence type="ECO:0000255" key="3">
    <source>
        <dbReference type="HAMAP-Rule" id="MF_03122"/>
    </source>
</evidence>
<evidence type="ECO:0000256" key="4">
    <source>
        <dbReference type="SAM" id="MobiDB-lite"/>
    </source>
</evidence>
<evidence type="ECO:0000305" key="5"/>
<accession>Q4R4Z6</accession>
<comment type="function">
    <text evidence="1 3">Component of the small ribosomal subunit. The ribosome is a large ribonucleoprotein complex responsible for the synthesis of proteins in the cell. Part of the small subunit (SSU) processome, first precursor of the small eukaryotic ribosomal subunit. During the assembly of the SSU processome in the nucleolus, many ribosome biogenesis factors, an RNA chaperone and ribosomal proteins associate with the nascent pre-rRNA and work in concert to generate RNA folding, modifications, rearrangements and cleavage as well as targeted degradation of pre-ribosomal RNA by the RNA exosome (By similarity). May play a role during erythropoiesis through regulation of transcription factor DDIT3 (By similarity).</text>
</comment>
<comment type="subunit">
    <text evidence="1">Component of the small ribosomal subunit. Mature ribosomes consist of a small (40S) and a large (60S) subunit. The 40S subunit contains about 33 different proteins and 1 molecule of RNA (18S). The 60S subunit contains about 49 different proteins and 3 molecules of RNA (28S, 5.8S and 5S). Identified in a IGF2BP1-dependent mRNP granule complex containing untranslated mRNAs. Binds with high affinity to IPO4. Interacts with DDIT3. Part of the small subunit (SSU) processome, composed of more than 70 proteins and the RNA chaperone small nucleolar RNA (snoRNA) U3.</text>
</comment>
<comment type="subcellular location">
    <subcellularLocation>
        <location evidence="2 3">Cytoplasm</location>
    </subcellularLocation>
    <subcellularLocation>
        <location evidence="2 3">Nucleus</location>
    </subcellularLocation>
    <subcellularLocation>
        <location evidence="1">Nucleus</location>
        <location evidence="1">Nucleolus</location>
    </subcellularLocation>
    <text evidence="2">Localized in cytoplasmic mRNP granules containing untranslated mRNAs.</text>
</comment>
<comment type="PTM">
    <text evidence="1">ADP-ribosylated at Tyr-155 by PARP1 in presence of HPF1.</text>
</comment>
<comment type="similarity">
    <text evidence="3">Belongs to the eukaryotic ribosomal protein eS1 family.</text>
</comment>
<keyword id="KW-0007">Acetylation</keyword>
<keyword id="KW-0013">ADP-ribosylation</keyword>
<keyword id="KW-0963">Cytoplasm</keyword>
<keyword id="KW-0221">Differentiation</keyword>
<keyword id="KW-1017">Isopeptide bond</keyword>
<keyword id="KW-0539">Nucleus</keyword>
<keyword id="KW-0597">Phosphoprotein</keyword>
<keyword id="KW-1185">Reference proteome</keyword>
<keyword id="KW-0687">Ribonucleoprotein</keyword>
<keyword id="KW-0689">Ribosomal protein</keyword>
<keyword id="KW-0832">Ubl conjugation</keyword>
<reference key="1">
    <citation type="submission" date="2005-06" db="EMBL/GenBank/DDBJ databases">
        <title>DNA sequences of macaque genes expressed in brain or testis and its evolutionary implications.</title>
        <authorList>
            <consortium name="International consortium for macaque cDNA sequencing and analysis"/>
        </authorList>
    </citation>
    <scope>NUCLEOTIDE SEQUENCE [LARGE SCALE MRNA]</scope>
    <source>
        <tissue>Parietal cortex</tissue>
    </source>
</reference>
<protein>
    <recommendedName>
        <fullName evidence="3">Small ribosomal subunit protein eS1</fullName>
    </recommendedName>
    <alternativeName>
        <fullName evidence="5">40S ribosomal protein S3a</fullName>
    </alternativeName>
</protein>